<proteinExistence type="inferred from homology"/>
<accession>B4TAX4</accession>
<protein>
    <recommendedName>
        <fullName evidence="1">ATP synthase subunit alpha</fullName>
        <ecNumber evidence="1">7.1.2.2</ecNumber>
    </recommendedName>
    <alternativeName>
        <fullName evidence="1">ATP synthase F1 sector subunit alpha</fullName>
    </alternativeName>
    <alternativeName>
        <fullName evidence="1">F-ATPase subunit alpha</fullName>
    </alternativeName>
</protein>
<organism>
    <name type="scientific">Salmonella heidelberg (strain SL476)</name>
    <dbReference type="NCBI Taxonomy" id="454169"/>
    <lineage>
        <taxon>Bacteria</taxon>
        <taxon>Pseudomonadati</taxon>
        <taxon>Pseudomonadota</taxon>
        <taxon>Gammaproteobacteria</taxon>
        <taxon>Enterobacterales</taxon>
        <taxon>Enterobacteriaceae</taxon>
        <taxon>Salmonella</taxon>
    </lineage>
</organism>
<gene>
    <name evidence="1" type="primary">atpA</name>
    <name type="ordered locus">SeHA_C4198</name>
</gene>
<dbReference type="EC" id="7.1.2.2" evidence="1"/>
<dbReference type="EMBL" id="CP001120">
    <property type="protein sequence ID" value="ACF69917.1"/>
    <property type="molecule type" value="Genomic_DNA"/>
</dbReference>
<dbReference type="RefSeq" id="WP_001176751.1">
    <property type="nucleotide sequence ID" value="NC_011083.1"/>
</dbReference>
<dbReference type="SMR" id="B4TAX4"/>
<dbReference type="GeneID" id="66758156"/>
<dbReference type="KEGG" id="seh:SeHA_C4198"/>
<dbReference type="HOGENOM" id="CLU_010091_2_1_6"/>
<dbReference type="Proteomes" id="UP000001866">
    <property type="component" value="Chromosome"/>
</dbReference>
<dbReference type="GO" id="GO:0005886">
    <property type="term" value="C:plasma membrane"/>
    <property type="evidence" value="ECO:0007669"/>
    <property type="project" value="UniProtKB-SubCell"/>
</dbReference>
<dbReference type="GO" id="GO:0045259">
    <property type="term" value="C:proton-transporting ATP synthase complex"/>
    <property type="evidence" value="ECO:0007669"/>
    <property type="project" value="UniProtKB-KW"/>
</dbReference>
<dbReference type="GO" id="GO:0043531">
    <property type="term" value="F:ADP binding"/>
    <property type="evidence" value="ECO:0007669"/>
    <property type="project" value="TreeGrafter"/>
</dbReference>
<dbReference type="GO" id="GO:0005524">
    <property type="term" value="F:ATP binding"/>
    <property type="evidence" value="ECO:0007669"/>
    <property type="project" value="UniProtKB-UniRule"/>
</dbReference>
<dbReference type="GO" id="GO:0046933">
    <property type="term" value="F:proton-transporting ATP synthase activity, rotational mechanism"/>
    <property type="evidence" value="ECO:0007669"/>
    <property type="project" value="UniProtKB-UniRule"/>
</dbReference>
<dbReference type="CDD" id="cd18113">
    <property type="entry name" value="ATP-synt_F1_alpha_C"/>
    <property type="match status" value="1"/>
</dbReference>
<dbReference type="CDD" id="cd18116">
    <property type="entry name" value="ATP-synt_F1_alpha_N"/>
    <property type="match status" value="1"/>
</dbReference>
<dbReference type="CDD" id="cd01132">
    <property type="entry name" value="F1-ATPase_alpha_CD"/>
    <property type="match status" value="1"/>
</dbReference>
<dbReference type="FunFam" id="1.20.150.20:FF:000001">
    <property type="entry name" value="ATP synthase subunit alpha"/>
    <property type="match status" value="1"/>
</dbReference>
<dbReference type="FunFam" id="2.40.30.20:FF:000001">
    <property type="entry name" value="ATP synthase subunit alpha"/>
    <property type="match status" value="1"/>
</dbReference>
<dbReference type="FunFam" id="3.40.50.300:FF:000002">
    <property type="entry name" value="ATP synthase subunit alpha"/>
    <property type="match status" value="1"/>
</dbReference>
<dbReference type="Gene3D" id="2.40.30.20">
    <property type="match status" value="1"/>
</dbReference>
<dbReference type="Gene3D" id="1.20.150.20">
    <property type="entry name" value="ATP synthase alpha/beta chain, C-terminal domain"/>
    <property type="match status" value="1"/>
</dbReference>
<dbReference type="Gene3D" id="3.40.50.300">
    <property type="entry name" value="P-loop containing nucleotide triphosphate hydrolases"/>
    <property type="match status" value="1"/>
</dbReference>
<dbReference type="HAMAP" id="MF_01346">
    <property type="entry name" value="ATP_synth_alpha_bact"/>
    <property type="match status" value="1"/>
</dbReference>
<dbReference type="InterPro" id="IPR023366">
    <property type="entry name" value="ATP_synth_asu-like_sf"/>
</dbReference>
<dbReference type="InterPro" id="IPR000793">
    <property type="entry name" value="ATP_synth_asu_C"/>
</dbReference>
<dbReference type="InterPro" id="IPR038376">
    <property type="entry name" value="ATP_synth_asu_C_sf"/>
</dbReference>
<dbReference type="InterPro" id="IPR033732">
    <property type="entry name" value="ATP_synth_F1_a_nt-bd_dom"/>
</dbReference>
<dbReference type="InterPro" id="IPR005294">
    <property type="entry name" value="ATP_synth_F1_asu"/>
</dbReference>
<dbReference type="InterPro" id="IPR020003">
    <property type="entry name" value="ATPase_a/bsu_AS"/>
</dbReference>
<dbReference type="InterPro" id="IPR004100">
    <property type="entry name" value="ATPase_F1/V1/A1_a/bsu_N"/>
</dbReference>
<dbReference type="InterPro" id="IPR036121">
    <property type="entry name" value="ATPase_F1/V1/A1_a/bsu_N_sf"/>
</dbReference>
<dbReference type="InterPro" id="IPR000194">
    <property type="entry name" value="ATPase_F1/V1/A1_a/bsu_nucl-bd"/>
</dbReference>
<dbReference type="InterPro" id="IPR027417">
    <property type="entry name" value="P-loop_NTPase"/>
</dbReference>
<dbReference type="NCBIfam" id="TIGR00962">
    <property type="entry name" value="atpA"/>
    <property type="match status" value="1"/>
</dbReference>
<dbReference type="NCBIfam" id="NF009884">
    <property type="entry name" value="PRK13343.1"/>
    <property type="match status" value="1"/>
</dbReference>
<dbReference type="PANTHER" id="PTHR48082">
    <property type="entry name" value="ATP SYNTHASE SUBUNIT ALPHA, MITOCHONDRIAL"/>
    <property type="match status" value="1"/>
</dbReference>
<dbReference type="PANTHER" id="PTHR48082:SF2">
    <property type="entry name" value="ATP SYNTHASE SUBUNIT ALPHA, MITOCHONDRIAL"/>
    <property type="match status" value="1"/>
</dbReference>
<dbReference type="Pfam" id="PF00006">
    <property type="entry name" value="ATP-synt_ab"/>
    <property type="match status" value="1"/>
</dbReference>
<dbReference type="Pfam" id="PF00306">
    <property type="entry name" value="ATP-synt_ab_C"/>
    <property type="match status" value="1"/>
</dbReference>
<dbReference type="Pfam" id="PF02874">
    <property type="entry name" value="ATP-synt_ab_N"/>
    <property type="match status" value="1"/>
</dbReference>
<dbReference type="SUPFAM" id="SSF47917">
    <property type="entry name" value="C-terminal domain of alpha and beta subunits of F1 ATP synthase"/>
    <property type="match status" value="1"/>
</dbReference>
<dbReference type="SUPFAM" id="SSF50615">
    <property type="entry name" value="N-terminal domain of alpha and beta subunits of F1 ATP synthase"/>
    <property type="match status" value="1"/>
</dbReference>
<dbReference type="SUPFAM" id="SSF52540">
    <property type="entry name" value="P-loop containing nucleoside triphosphate hydrolases"/>
    <property type="match status" value="1"/>
</dbReference>
<dbReference type="PROSITE" id="PS00152">
    <property type="entry name" value="ATPASE_ALPHA_BETA"/>
    <property type="match status" value="1"/>
</dbReference>
<comment type="function">
    <text evidence="1">Produces ATP from ADP in the presence of a proton gradient across the membrane. The alpha chain is a regulatory subunit.</text>
</comment>
<comment type="catalytic activity">
    <reaction evidence="1">
        <text>ATP + H2O + 4 H(+)(in) = ADP + phosphate + 5 H(+)(out)</text>
        <dbReference type="Rhea" id="RHEA:57720"/>
        <dbReference type="ChEBI" id="CHEBI:15377"/>
        <dbReference type="ChEBI" id="CHEBI:15378"/>
        <dbReference type="ChEBI" id="CHEBI:30616"/>
        <dbReference type="ChEBI" id="CHEBI:43474"/>
        <dbReference type="ChEBI" id="CHEBI:456216"/>
        <dbReference type="EC" id="7.1.2.2"/>
    </reaction>
</comment>
<comment type="subunit">
    <text evidence="1">F-type ATPases have 2 components, CF(1) - the catalytic core - and CF(0) - the membrane proton channel. CF(1) has five subunits: alpha(3), beta(3), gamma(1), delta(1), epsilon(1). CF(0) has three main subunits: a(1), b(2) and c(9-12). The alpha and beta chains form an alternating ring which encloses part of the gamma chain. CF(1) is attached to CF(0) by a central stalk formed by the gamma and epsilon chains, while a peripheral stalk is formed by the delta and b chains.</text>
</comment>
<comment type="subcellular location">
    <subcellularLocation>
        <location evidence="1">Cell inner membrane</location>
        <topology evidence="1">Peripheral membrane protein</topology>
    </subcellularLocation>
</comment>
<comment type="similarity">
    <text evidence="1">Belongs to the ATPase alpha/beta chains family.</text>
</comment>
<evidence type="ECO:0000255" key="1">
    <source>
        <dbReference type="HAMAP-Rule" id="MF_01346"/>
    </source>
</evidence>
<name>ATPA_SALHS</name>
<keyword id="KW-0066">ATP synthesis</keyword>
<keyword id="KW-0067">ATP-binding</keyword>
<keyword id="KW-0997">Cell inner membrane</keyword>
<keyword id="KW-1003">Cell membrane</keyword>
<keyword id="KW-0139">CF(1)</keyword>
<keyword id="KW-0375">Hydrogen ion transport</keyword>
<keyword id="KW-0406">Ion transport</keyword>
<keyword id="KW-0472">Membrane</keyword>
<keyword id="KW-0547">Nucleotide-binding</keyword>
<keyword id="KW-1278">Translocase</keyword>
<keyword id="KW-0813">Transport</keyword>
<reference key="1">
    <citation type="journal article" date="2011" name="J. Bacteriol.">
        <title>Comparative genomics of 28 Salmonella enterica isolates: evidence for CRISPR-mediated adaptive sublineage evolution.</title>
        <authorList>
            <person name="Fricke W.F."/>
            <person name="Mammel M.K."/>
            <person name="McDermott P.F."/>
            <person name="Tartera C."/>
            <person name="White D.G."/>
            <person name="Leclerc J.E."/>
            <person name="Ravel J."/>
            <person name="Cebula T.A."/>
        </authorList>
    </citation>
    <scope>NUCLEOTIDE SEQUENCE [LARGE SCALE GENOMIC DNA]</scope>
    <source>
        <strain>SL476</strain>
    </source>
</reference>
<sequence length="513" mass="55113">MQLNSTEISELIKQRIAQFNVVSEAHNEGTIVSVSDGVIRIHGLADCMQGEMISLPGNRYAIALNLERDSVGAVVMGPYADLAEGMKVKCTGRILEVPVGRGLLGRVVNTLGAPIDGKGPVDNDGFSAVEAIAPGVIDRQSVDQPVQTGYKAVDSMIPIGRGQRELIIGDRQTGKTALAIDAIINQRDSGIKCIYVAIGQKASTISNVVRKLEEHGALANTIVVVATASESAALQYLAPYAGCAMGEYFRDRGEDALIIYDDLSKQAVAYRQISLLLRRPPGREAFPGDVFYLHSRLLERAARVNADYVEAFTKGEVKGKTGSLTALPIIETQAGDVSAFVPTNVISITDGQIFLESNLFNAGIRPAVNPGISVSRVGGAAQTKIMKKLSGGIRTALAQYRELAAFSQFASDLDDATRKQLDHGQKVTELLKQKQYAPMSVAQQSLVLFAAERGYLADVELAKIGSFEAALLAYVDRDHAPLMQEINQSGGYNDEIEGKLKGILDSFKATQSW</sequence>
<feature type="chain" id="PRO_1000143432" description="ATP synthase subunit alpha">
    <location>
        <begin position="1"/>
        <end position="513"/>
    </location>
</feature>
<feature type="binding site" evidence="1">
    <location>
        <begin position="169"/>
        <end position="176"/>
    </location>
    <ligand>
        <name>ATP</name>
        <dbReference type="ChEBI" id="CHEBI:30616"/>
    </ligand>
</feature>
<feature type="site" description="Required for activity" evidence="1">
    <location>
        <position position="373"/>
    </location>
</feature>